<evidence type="ECO:0000250" key="1">
    <source>
        <dbReference type="UniProtKB" id="O75396"/>
    </source>
</evidence>
<evidence type="ECO:0000255" key="2"/>
<evidence type="ECO:0000255" key="3">
    <source>
        <dbReference type="PROSITE-ProRule" id="PRU00231"/>
    </source>
</evidence>
<evidence type="ECO:0000255" key="4">
    <source>
        <dbReference type="PROSITE-ProRule" id="PRU00290"/>
    </source>
</evidence>
<evidence type="ECO:0000269" key="5">
    <source>
    </source>
</evidence>
<evidence type="ECO:0000269" key="6">
    <source>
    </source>
</evidence>
<evidence type="ECO:0000305" key="7"/>
<evidence type="ECO:0000305" key="8">
    <source>
    </source>
</evidence>
<evidence type="ECO:0007744" key="9">
    <source>
    </source>
</evidence>
<gene>
    <name type="primary">Sec22b</name>
    <name type="synonym">Sec22l1</name>
</gene>
<protein>
    <recommendedName>
        <fullName>Vesicle-trafficking protein SEC22b</fullName>
    </recommendedName>
    <alternativeName>
        <fullName>ER-Golgi SNARE of 24 kDa</fullName>
        <shortName>ERS-24</shortName>
        <shortName>ERS24</shortName>
    </alternativeName>
    <alternativeName>
        <fullName>SEC22 vesicle-trafficking protein homolog B</fullName>
    </alternativeName>
    <alternativeName>
        <fullName>SEC22 vesicle-trafficking protein-like 1</fullName>
    </alternativeName>
</protein>
<proteinExistence type="evidence at protein level"/>
<accession>Q4KM74</accession>
<sequence>MVLLTMIARVADGLPLAASMQEDEQSGRDLQQYQSQAKQLFRKLNEQSPTRCTLEAGAMTFHYIIEQGVCYLVLCEAAFPKKLAFAYLEDLHSEFDEQHGKKVPTVSRPYSFIEFDTFIQKTKKLYIDSRARRNLGSINTELQDVQRIMVANIEEVLQRGEALSALDSKANNLSSLSKKYRQDAKYLNMRSTYAKLAAVAVFFIMLIVYVRFWWL</sequence>
<comment type="function">
    <text evidence="1 5 6">SNARE involved in targeting and fusion of ER-derived transport vesicles with the Golgi complex as well as Golgi-derived retrograde transport vesicles with the ER.</text>
</comment>
<comment type="subunit">
    <text evidence="1 5 8">Interacts with STX17 (Probable). Component of two distinct SNARE complexes consisting of STX5, GOSR2/BOS1, BET1 and SEC22B or STX18, USE1L, BNIP1/SEC20L and SEC22B. YKT6 can probably replace SEC22B as subunit of either complex. Interacts with the COPII Sec23/24 complex composed of SEC23A and SEC24A; recruits SEC22B into COPII-coated vesicles to allow its transport from the endoplasmic reticulum to the Golgi (By similarity). Interacts with BET1 (By similarity).</text>
</comment>
<comment type="subcellular location">
    <subcellularLocation>
        <location evidence="6">Endoplasmic reticulum membrane</location>
        <topology evidence="6">Single-pass type IV membrane protein</topology>
    </subcellularLocation>
    <subcellularLocation>
        <location evidence="6">Endoplasmic reticulum-Golgi intermediate compartment membrane</location>
    </subcellularLocation>
    <subcellularLocation>
        <location evidence="6">Golgi apparatus</location>
        <location evidence="6">cis-Golgi network membrane</location>
    </subcellularLocation>
    <subcellularLocation>
        <location evidence="6">Golgi apparatus</location>
        <location evidence="6">trans-Golgi network membrane</location>
    </subcellularLocation>
    <subcellularLocation>
        <location evidence="1">Melanosome</location>
    </subcellularLocation>
    <text evidence="6">Concentrated most in the intermediate compartment/cis-Golgi network and the cis-Golgi cisternae 1 and 2. Greatly reduced in concentration at the trans end of the Golgi apparatus.</text>
</comment>
<comment type="similarity">
    <text evidence="2">Belongs to the synaptobrevin family.</text>
</comment>
<keyword id="KW-0007">Acetylation</keyword>
<keyword id="KW-0175">Coiled coil</keyword>
<keyword id="KW-0256">Endoplasmic reticulum</keyword>
<keyword id="KW-0931">ER-Golgi transport</keyword>
<keyword id="KW-0333">Golgi apparatus</keyword>
<keyword id="KW-0472">Membrane</keyword>
<keyword id="KW-0597">Phosphoprotein</keyword>
<keyword id="KW-0653">Protein transport</keyword>
<keyword id="KW-1185">Reference proteome</keyword>
<keyword id="KW-0812">Transmembrane</keyword>
<keyword id="KW-1133">Transmembrane helix</keyword>
<keyword id="KW-0813">Transport</keyword>
<organism>
    <name type="scientific">Rattus norvegicus</name>
    <name type="common">Rat</name>
    <dbReference type="NCBI Taxonomy" id="10116"/>
    <lineage>
        <taxon>Eukaryota</taxon>
        <taxon>Metazoa</taxon>
        <taxon>Chordata</taxon>
        <taxon>Craniata</taxon>
        <taxon>Vertebrata</taxon>
        <taxon>Euteleostomi</taxon>
        <taxon>Mammalia</taxon>
        <taxon>Eutheria</taxon>
        <taxon>Euarchontoglires</taxon>
        <taxon>Glires</taxon>
        <taxon>Rodentia</taxon>
        <taxon>Myomorpha</taxon>
        <taxon>Muroidea</taxon>
        <taxon>Muridae</taxon>
        <taxon>Murinae</taxon>
        <taxon>Rattus</taxon>
    </lineage>
</organism>
<feature type="chain" id="PRO_0000253048" description="Vesicle-trafficking protein SEC22b">
    <location>
        <begin position="1"/>
        <end position="215"/>
    </location>
</feature>
<feature type="topological domain" description="Cytoplasmic" evidence="2">
    <location>
        <begin position="1"/>
        <end position="194"/>
    </location>
</feature>
<feature type="transmembrane region" description="Helical; Anchor for type IV membrane protein" evidence="2">
    <location>
        <begin position="195"/>
        <end position="215"/>
    </location>
</feature>
<feature type="domain" description="Longin" evidence="3">
    <location>
        <begin position="6"/>
        <end position="119"/>
    </location>
</feature>
<feature type="domain" description="v-SNARE coiled-coil homology" evidence="4">
    <location>
        <begin position="134"/>
        <end position="194"/>
    </location>
</feature>
<feature type="modified residue" description="N6-acetyllysine" evidence="1">
    <location>
        <position position="38"/>
    </location>
</feature>
<feature type="modified residue" description="Phosphoserine" evidence="9">
    <location>
        <position position="137"/>
    </location>
</feature>
<feature type="modified residue" description="Phosphothreonine" evidence="1">
    <location>
        <position position="140"/>
    </location>
</feature>
<feature type="modified residue" description="Phosphoserine" evidence="1">
    <location>
        <position position="164"/>
    </location>
</feature>
<feature type="modified residue" description="Phosphoserine" evidence="9">
    <location>
        <position position="168"/>
    </location>
</feature>
<feature type="modified residue" description="Phosphoserine" evidence="1">
    <location>
        <position position="174"/>
    </location>
</feature>
<feature type="modified residue" description="Phosphoserine" evidence="1">
    <location>
        <position position="177"/>
    </location>
</feature>
<reference key="1">
    <citation type="journal article" date="2004" name="Genome Res.">
        <title>The status, quality, and expansion of the NIH full-length cDNA project: the Mammalian Gene Collection (MGC).</title>
        <authorList>
            <consortium name="The MGC Project Team"/>
        </authorList>
    </citation>
    <scope>NUCLEOTIDE SEQUENCE [LARGE SCALE MRNA]</scope>
    <source>
        <tissue>Spleen</tissue>
    </source>
</reference>
<reference evidence="7" key="2">
    <citation type="journal article" date="2000" name="J. Biol. Chem.">
        <title>Subunit structure of a mammalian ER/Golgi SNARE complex.</title>
        <authorList>
            <person name="Xu D."/>
            <person name="Joglekar A.P."/>
            <person name="Williams A.L."/>
            <person name="Hay J.C."/>
        </authorList>
    </citation>
    <scope>FUNCTION</scope>
    <scope>INTERACTION WITH BET1; GOSR2 AND STX5</scope>
</reference>
<reference key="3">
    <citation type="journal article" date="2000" name="Mol. Biol. Cell">
        <title>Syntaxin 17 is abundant in steroidogenic cells and implicated in smooth endoplasmic reticulum membrane dynamics.</title>
        <authorList>
            <person name="Steegmaier M."/>
            <person name="Oorschot V."/>
            <person name="Klumperman J."/>
            <person name="Scheller R.H."/>
        </authorList>
    </citation>
    <scope>INTERACTION WITH STX17</scope>
</reference>
<reference evidence="7" key="4">
    <citation type="journal article" date="2004" name="Mol. Biol. Cell">
        <title>Countercurrent distribution of two distinct SNARE complexes mediating transport within the Golgi stack.</title>
        <authorList>
            <person name="Volchuk A."/>
            <person name="Ravazzola M."/>
            <person name="Perrelet A."/>
            <person name="Eng W.S."/>
            <person name="Di Liberto M."/>
            <person name="Varlamov O."/>
            <person name="Fukasawa M."/>
            <person name="Engel T."/>
            <person name="Sollner T.H."/>
            <person name="Rothman J.E."/>
            <person name="Orci L."/>
        </authorList>
    </citation>
    <scope>SUBCELLULAR LOCATION</scope>
    <scope>FUNCTION</scope>
</reference>
<reference key="5">
    <citation type="journal article" date="2012" name="Nat. Commun.">
        <title>Quantitative maps of protein phosphorylation sites across 14 different rat organs and tissues.</title>
        <authorList>
            <person name="Lundby A."/>
            <person name="Secher A."/>
            <person name="Lage K."/>
            <person name="Nordsborg N.B."/>
            <person name="Dmytriyev A."/>
            <person name="Lundby C."/>
            <person name="Olsen J.V."/>
        </authorList>
    </citation>
    <scope>PHOSPHORYLATION [LARGE SCALE ANALYSIS] AT SER-137 AND SER-168</scope>
    <scope>IDENTIFICATION BY MASS SPECTROMETRY [LARGE SCALE ANALYSIS]</scope>
</reference>
<name>SC22B_RAT</name>
<dbReference type="EMBL" id="BC098725">
    <property type="protein sequence ID" value="AAH98725.1"/>
    <property type="molecule type" value="mRNA"/>
</dbReference>
<dbReference type="RefSeq" id="NP_001020857.1">
    <property type="nucleotide sequence ID" value="NM_001025686.1"/>
</dbReference>
<dbReference type="SMR" id="Q4KM74"/>
<dbReference type="BioGRID" id="259729">
    <property type="interactions" value="3"/>
</dbReference>
<dbReference type="CORUM" id="Q4KM74"/>
<dbReference type="FunCoup" id="Q4KM74">
    <property type="interactions" value="3586"/>
</dbReference>
<dbReference type="IntAct" id="Q4KM74">
    <property type="interactions" value="6"/>
</dbReference>
<dbReference type="STRING" id="10116.ENSRNOP00000025327"/>
<dbReference type="iPTMnet" id="Q4KM74"/>
<dbReference type="PhosphoSitePlus" id="Q4KM74"/>
<dbReference type="jPOST" id="Q4KM74"/>
<dbReference type="PaxDb" id="10116-ENSRNOP00000025327"/>
<dbReference type="Ensembl" id="ENSRNOT00000025327.9">
    <property type="protein sequence ID" value="ENSRNOP00000025327.4"/>
    <property type="gene ID" value="ENSRNOG00000018673.9"/>
</dbReference>
<dbReference type="GeneID" id="310710"/>
<dbReference type="KEGG" id="rno:310710"/>
<dbReference type="UCSC" id="RGD:1309988">
    <property type="organism name" value="rat"/>
</dbReference>
<dbReference type="AGR" id="RGD:1309988"/>
<dbReference type="CTD" id="9554"/>
<dbReference type="RGD" id="1309988">
    <property type="gene designation" value="Sec22b"/>
</dbReference>
<dbReference type="eggNOG" id="KOG0862">
    <property type="taxonomic scope" value="Eukaryota"/>
</dbReference>
<dbReference type="GeneTree" id="ENSGT00940000156349"/>
<dbReference type="HOGENOM" id="CLU_054453_4_1_1"/>
<dbReference type="InParanoid" id="Q4KM74"/>
<dbReference type="OMA" id="FIYWRFF"/>
<dbReference type="OrthoDB" id="1719357at2759"/>
<dbReference type="PhylomeDB" id="Q4KM74"/>
<dbReference type="TreeFam" id="TF105933"/>
<dbReference type="Reactome" id="R-RNO-1236974">
    <property type="pathway name" value="ER-Phagosome pathway"/>
</dbReference>
<dbReference type="Reactome" id="R-RNO-204005">
    <property type="pathway name" value="COPII-mediated vesicle transport"/>
</dbReference>
<dbReference type="Reactome" id="R-RNO-5694530">
    <property type="pathway name" value="Cargo concentration in the ER"/>
</dbReference>
<dbReference type="Reactome" id="R-RNO-6811434">
    <property type="pathway name" value="COPI-dependent Golgi-to-ER retrograde traffic"/>
</dbReference>
<dbReference type="PRO" id="PR:Q4KM74"/>
<dbReference type="Proteomes" id="UP000002494">
    <property type="component" value="Chromosome 2"/>
</dbReference>
<dbReference type="Bgee" id="ENSRNOG00000018673">
    <property type="expression patterns" value="Expressed in jejunum and 20 other cell types or tissues"/>
</dbReference>
<dbReference type="GO" id="GO:0030137">
    <property type="term" value="C:COPI-coated vesicle"/>
    <property type="evidence" value="ECO:0000314"/>
    <property type="project" value="RGD"/>
</dbReference>
<dbReference type="GO" id="GO:0005789">
    <property type="term" value="C:endoplasmic reticulum membrane"/>
    <property type="evidence" value="ECO:0000266"/>
    <property type="project" value="RGD"/>
</dbReference>
<dbReference type="GO" id="GO:0005793">
    <property type="term" value="C:endoplasmic reticulum-Golgi intermediate compartment"/>
    <property type="evidence" value="ECO:0000266"/>
    <property type="project" value="RGD"/>
</dbReference>
<dbReference type="GO" id="GO:0033116">
    <property type="term" value="C:endoplasmic reticulum-Golgi intermediate compartment membrane"/>
    <property type="evidence" value="ECO:0007669"/>
    <property type="project" value="UniProtKB-SubCell"/>
</dbReference>
<dbReference type="GO" id="GO:0012507">
    <property type="term" value="C:ER to Golgi transport vesicle membrane"/>
    <property type="evidence" value="ECO:0000266"/>
    <property type="project" value="RGD"/>
</dbReference>
<dbReference type="GO" id="GO:0000139">
    <property type="term" value="C:Golgi membrane"/>
    <property type="evidence" value="ECO:0000266"/>
    <property type="project" value="RGD"/>
</dbReference>
<dbReference type="GO" id="GO:0042470">
    <property type="term" value="C:melanosome"/>
    <property type="evidence" value="ECO:0007669"/>
    <property type="project" value="UniProtKB-SubCell"/>
</dbReference>
<dbReference type="GO" id="GO:0031201">
    <property type="term" value="C:SNARE complex"/>
    <property type="evidence" value="ECO:0000314"/>
    <property type="project" value="RGD"/>
</dbReference>
<dbReference type="GO" id="GO:0008021">
    <property type="term" value="C:synaptic vesicle"/>
    <property type="evidence" value="ECO:0000314"/>
    <property type="project" value="SynGO"/>
</dbReference>
<dbReference type="GO" id="GO:0005484">
    <property type="term" value="F:SNAP receptor activity"/>
    <property type="evidence" value="ECO:0000318"/>
    <property type="project" value="GO_Central"/>
</dbReference>
<dbReference type="GO" id="GO:0019905">
    <property type="term" value="F:syntaxin binding"/>
    <property type="evidence" value="ECO:0000353"/>
    <property type="project" value="UniProtKB"/>
</dbReference>
<dbReference type="GO" id="GO:0006888">
    <property type="term" value="P:endoplasmic reticulum to Golgi vesicle-mediated transport"/>
    <property type="evidence" value="ECO:0000318"/>
    <property type="project" value="GO_Central"/>
</dbReference>
<dbReference type="GO" id="GO:1902902">
    <property type="term" value="P:negative regulation of autophagosome assembly"/>
    <property type="evidence" value="ECO:0000266"/>
    <property type="project" value="RGD"/>
</dbReference>
<dbReference type="GO" id="GO:0045732">
    <property type="term" value="P:positive regulation of protein catabolic process"/>
    <property type="evidence" value="ECO:0000266"/>
    <property type="project" value="RGD"/>
</dbReference>
<dbReference type="GO" id="GO:0015031">
    <property type="term" value="P:protein transport"/>
    <property type="evidence" value="ECO:0007669"/>
    <property type="project" value="UniProtKB-KW"/>
</dbReference>
<dbReference type="GO" id="GO:0006890">
    <property type="term" value="P:retrograde vesicle-mediated transport, Golgi to endoplasmic reticulum"/>
    <property type="evidence" value="ECO:0000318"/>
    <property type="project" value="GO_Central"/>
</dbReference>
<dbReference type="GO" id="GO:0048280">
    <property type="term" value="P:vesicle fusion with Golgi apparatus"/>
    <property type="evidence" value="ECO:0000318"/>
    <property type="project" value="GO_Central"/>
</dbReference>
<dbReference type="GO" id="GO:0016192">
    <property type="term" value="P:vesicle-mediated transport"/>
    <property type="evidence" value="ECO:0000266"/>
    <property type="project" value="RGD"/>
</dbReference>
<dbReference type="CDD" id="cd14824">
    <property type="entry name" value="Longin"/>
    <property type="match status" value="1"/>
</dbReference>
<dbReference type="CDD" id="cd15866">
    <property type="entry name" value="R-SNARE_SEC22"/>
    <property type="match status" value="1"/>
</dbReference>
<dbReference type="FunFam" id="1.20.5.110:FF:000019">
    <property type="entry name" value="Vesicle-trafficking protein SEC22b"/>
    <property type="match status" value="1"/>
</dbReference>
<dbReference type="FunFam" id="3.30.450.50:FF:000004">
    <property type="entry name" value="vesicle-trafficking protein SEC22b"/>
    <property type="match status" value="1"/>
</dbReference>
<dbReference type="Gene3D" id="1.20.5.110">
    <property type="match status" value="1"/>
</dbReference>
<dbReference type="Gene3D" id="3.30.450.50">
    <property type="entry name" value="Longin domain"/>
    <property type="match status" value="1"/>
</dbReference>
<dbReference type="InterPro" id="IPR011012">
    <property type="entry name" value="Longin-like_dom_sf"/>
</dbReference>
<dbReference type="InterPro" id="IPR010908">
    <property type="entry name" value="Longin_dom"/>
</dbReference>
<dbReference type="InterPro" id="IPR044565">
    <property type="entry name" value="Sec22"/>
</dbReference>
<dbReference type="InterPro" id="IPR001388">
    <property type="entry name" value="Synaptobrevin-like"/>
</dbReference>
<dbReference type="InterPro" id="IPR042855">
    <property type="entry name" value="V_SNARE_CC"/>
</dbReference>
<dbReference type="PANTHER" id="PTHR45837">
    <property type="entry name" value="VESICLE-TRAFFICKING PROTEIN SEC22B"/>
    <property type="match status" value="1"/>
</dbReference>
<dbReference type="Pfam" id="PF13774">
    <property type="entry name" value="Longin"/>
    <property type="match status" value="1"/>
</dbReference>
<dbReference type="Pfam" id="PF00957">
    <property type="entry name" value="Synaptobrevin"/>
    <property type="match status" value="1"/>
</dbReference>
<dbReference type="PRINTS" id="PR00219">
    <property type="entry name" value="SYNAPTOBREVN"/>
</dbReference>
<dbReference type="SMART" id="SM01270">
    <property type="entry name" value="Longin"/>
    <property type="match status" value="1"/>
</dbReference>
<dbReference type="SUPFAM" id="SSF58038">
    <property type="entry name" value="SNARE fusion complex"/>
    <property type="match status" value="1"/>
</dbReference>
<dbReference type="SUPFAM" id="SSF64356">
    <property type="entry name" value="SNARE-like"/>
    <property type="match status" value="1"/>
</dbReference>
<dbReference type="PROSITE" id="PS50859">
    <property type="entry name" value="LONGIN"/>
    <property type="match status" value="1"/>
</dbReference>
<dbReference type="PROSITE" id="PS50892">
    <property type="entry name" value="V_SNARE"/>
    <property type="match status" value="1"/>
</dbReference>